<dbReference type="EMBL" id="Z49884">
    <property type="protein sequence ID" value="CAA90041.1"/>
    <property type="molecule type" value="Genomic_DNA"/>
</dbReference>
<dbReference type="EMBL" id="AL009126">
    <property type="protein sequence ID" value="CAB15760.2"/>
    <property type="molecule type" value="Genomic_DNA"/>
</dbReference>
<dbReference type="EMBL" id="Z97024">
    <property type="protein sequence ID" value="CAB09704.1"/>
    <property type="molecule type" value="Genomic_DNA"/>
</dbReference>
<dbReference type="PIR" id="S60080">
    <property type="entry name" value="S60080"/>
</dbReference>
<dbReference type="RefSeq" id="NP_391613.2">
    <property type="nucleotide sequence ID" value="NC_000964.3"/>
</dbReference>
<dbReference type="RefSeq" id="WP_010886631.1">
    <property type="nucleotide sequence ID" value="NZ_OZ025638.1"/>
</dbReference>
<dbReference type="SMR" id="P46907"/>
<dbReference type="FunCoup" id="P46907">
    <property type="interactions" value="240"/>
</dbReference>
<dbReference type="STRING" id="224308.BSU37320"/>
<dbReference type="PaxDb" id="224308-BSU37320"/>
<dbReference type="EnsemblBacteria" id="CAB15760">
    <property type="protein sequence ID" value="CAB15760"/>
    <property type="gene ID" value="BSU_37320"/>
</dbReference>
<dbReference type="GeneID" id="937055"/>
<dbReference type="KEGG" id="bsu:BSU37320"/>
<dbReference type="PATRIC" id="fig|224308.179.peg.4043"/>
<dbReference type="eggNOG" id="COG2223">
    <property type="taxonomic scope" value="Bacteria"/>
</dbReference>
<dbReference type="InParanoid" id="P46907"/>
<dbReference type="OrthoDB" id="9773404at2"/>
<dbReference type="PhylomeDB" id="P46907"/>
<dbReference type="BioCyc" id="BSUB:BSU37320-MONOMER"/>
<dbReference type="Proteomes" id="UP000001570">
    <property type="component" value="Chromosome"/>
</dbReference>
<dbReference type="GO" id="GO:0005886">
    <property type="term" value="C:plasma membrane"/>
    <property type="evidence" value="ECO:0007669"/>
    <property type="project" value="UniProtKB-SubCell"/>
</dbReference>
<dbReference type="GO" id="GO:0015112">
    <property type="term" value="F:nitrate transmembrane transporter activity"/>
    <property type="evidence" value="ECO:0007669"/>
    <property type="project" value="InterPro"/>
</dbReference>
<dbReference type="GO" id="GO:0042128">
    <property type="term" value="P:nitrate assimilation"/>
    <property type="evidence" value="ECO:0007669"/>
    <property type="project" value="UniProtKB-KW"/>
</dbReference>
<dbReference type="CDD" id="cd17341">
    <property type="entry name" value="MFS_NRT2_like"/>
    <property type="match status" value="1"/>
</dbReference>
<dbReference type="Gene3D" id="1.20.1250.20">
    <property type="entry name" value="MFS general substrate transporter like domains"/>
    <property type="match status" value="1"/>
</dbReference>
<dbReference type="InterPro" id="IPR011701">
    <property type="entry name" value="MFS"/>
</dbReference>
<dbReference type="InterPro" id="IPR020846">
    <property type="entry name" value="MFS_dom"/>
</dbReference>
<dbReference type="InterPro" id="IPR036259">
    <property type="entry name" value="MFS_trans_sf"/>
</dbReference>
<dbReference type="InterPro" id="IPR044772">
    <property type="entry name" value="NO3_transporter"/>
</dbReference>
<dbReference type="PANTHER" id="PTHR23515">
    <property type="entry name" value="HIGH-AFFINITY NITRATE TRANSPORTER 2.3"/>
    <property type="match status" value="1"/>
</dbReference>
<dbReference type="Pfam" id="PF07690">
    <property type="entry name" value="MFS_1"/>
    <property type="match status" value="1"/>
</dbReference>
<dbReference type="SUPFAM" id="SSF103473">
    <property type="entry name" value="MFS general substrate transporter"/>
    <property type="match status" value="1"/>
</dbReference>
<dbReference type="PROSITE" id="PS50850">
    <property type="entry name" value="MFS"/>
    <property type="match status" value="1"/>
</dbReference>
<name>NARK_BACSU</name>
<feature type="chain" id="PRO_0000096727" description="Nitrite extrusion protein">
    <location>
        <begin position="1"/>
        <end position="395"/>
    </location>
</feature>
<feature type="transmembrane region" description="Helical" evidence="1">
    <location>
        <begin position="15"/>
        <end position="35"/>
    </location>
</feature>
<feature type="transmembrane region" description="Helical" evidence="1">
    <location>
        <begin position="44"/>
        <end position="64"/>
    </location>
</feature>
<feature type="transmembrane region" description="Helical" evidence="1">
    <location>
        <begin position="73"/>
        <end position="93"/>
    </location>
</feature>
<feature type="transmembrane region" description="Helical" evidence="1">
    <location>
        <begin position="96"/>
        <end position="116"/>
    </location>
</feature>
<feature type="transmembrane region" description="Helical" evidence="1">
    <location>
        <begin position="133"/>
        <end position="153"/>
    </location>
</feature>
<feature type="transmembrane region" description="Helical" evidence="1">
    <location>
        <begin position="160"/>
        <end position="180"/>
    </location>
</feature>
<feature type="transmembrane region" description="Helical" evidence="1">
    <location>
        <begin position="203"/>
        <end position="223"/>
    </location>
</feature>
<feature type="transmembrane region" description="Helical" evidence="1">
    <location>
        <begin position="240"/>
        <end position="262"/>
    </location>
</feature>
<feature type="transmembrane region" description="Helical" evidence="1">
    <location>
        <begin position="271"/>
        <end position="291"/>
    </location>
</feature>
<feature type="transmembrane region" description="Helical" evidence="1">
    <location>
        <begin position="293"/>
        <end position="313"/>
    </location>
</feature>
<feature type="transmembrane region" description="Helical" evidence="1">
    <location>
        <begin position="330"/>
        <end position="350"/>
    </location>
</feature>
<feature type="transmembrane region" description="Helical" evidence="1">
    <location>
        <begin position="357"/>
        <end position="377"/>
    </location>
</feature>
<feature type="sequence conflict" description="In Ref. 1; CAA90041." evidence="2" ref="1">
    <original>A</original>
    <variation>T</variation>
    <location>
        <position position="276"/>
    </location>
</feature>
<sequence length="395" mass="42926">MINRQHIQLSLQSLSLVAGFMVWVLISSLISQITLDIHLSKGEISLVTAIPVILGSLLRIPLGYLTNRFGARLMFMVSFILLLFPVFWISIADSLFDLIAGGFFLGIGGAVFSIGVTSLPKYYPKEKHGVVNGIYGAGNIGTAVTTFAAPVIAQAVGWKSTVQMYLILLAVFALLHVLFGDRHEKKVKVSVKTQIKAVYRNHVLWFLSLFYFITFGAFVAFTIYLPNFLVEHFGLNPADAGLRTAGFIAVSTLLRPAGGFLADKMSPLRILMFVFAGLTLSGIILSFSPTIGLYTFGSLTVAVCSGIGNGTVFKLVPFYFSKQAGIANGIVSAMGGLGGFFPPLILASVFQATGQYAIGFMALSEVALASFVLVIWMYWQERMKTHTERNSQSIN</sequence>
<proteinExistence type="inferred from homology"/>
<keyword id="KW-1003">Cell membrane</keyword>
<keyword id="KW-0472">Membrane</keyword>
<keyword id="KW-0534">Nitrate assimilation</keyword>
<keyword id="KW-1185">Reference proteome</keyword>
<keyword id="KW-0812">Transmembrane</keyword>
<keyword id="KW-1133">Transmembrane helix</keyword>
<keyword id="KW-0813">Transport</keyword>
<evidence type="ECO:0000255" key="1"/>
<evidence type="ECO:0000305" key="2"/>
<protein>
    <recommendedName>
        <fullName>Nitrite extrusion protein</fullName>
    </recommendedName>
    <alternativeName>
        <fullName>Nitrite facilitator</fullName>
    </alternativeName>
</protein>
<reference key="1">
    <citation type="journal article" date="1995" name="EMBO J.">
        <title>Anaerobic transcription activation in Bacillus subtilis: identification of distinct FNR-dependent and -independent regulatory mechanisms.</title>
        <authorList>
            <person name="Cruz Ramos H."/>
            <person name="Boursier L."/>
            <person name="Moszer I."/>
            <person name="Kunst F."/>
            <person name="Danchin A."/>
            <person name="Glaser P."/>
        </authorList>
    </citation>
    <scope>NUCLEOTIDE SEQUENCE [GENOMIC DNA]</scope>
    <source>
        <strain>168</strain>
    </source>
</reference>
<reference key="2">
    <citation type="journal article" date="1997" name="Nature">
        <title>The complete genome sequence of the Gram-positive bacterium Bacillus subtilis.</title>
        <authorList>
            <person name="Kunst F."/>
            <person name="Ogasawara N."/>
            <person name="Moszer I."/>
            <person name="Albertini A.M."/>
            <person name="Alloni G."/>
            <person name="Azevedo V."/>
            <person name="Bertero M.G."/>
            <person name="Bessieres P."/>
            <person name="Bolotin A."/>
            <person name="Borchert S."/>
            <person name="Borriss R."/>
            <person name="Boursier L."/>
            <person name="Brans A."/>
            <person name="Braun M."/>
            <person name="Brignell S.C."/>
            <person name="Bron S."/>
            <person name="Brouillet S."/>
            <person name="Bruschi C.V."/>
            <person name="Caldwell B."/>
            <person name="Capuano V."/>
            <person name="Carter N.M."/>
            <person name="Choi S.-K."/>
            <person name="Codani J.-J."/>
            <person name="Connerton I.F."/>
            <person name="Cummings N.J."/>
            <person name="Daniel R.A."/>
            <person name="Denizot F."/>
            <person name="Devine K.M."/>
            <person name="Duesterhoeft A."/>
            <person name="Ehrlich S.D."/>
            <person name="Emmerson P.T."/>
            <person name="Entian K.-D."/>
            <person name="Errington J."/>
            <person name="Fabret C."/>
            <person name="Ferrari E."/>
            <person name="Foulger D."/>
            <person name="Fritz C."/>
            <person name="Fujita M."/>
            <person name="Fujita Y."/>
            <person name="Fuma S."/>
            <person name="Galizzi A."/>
            <person name="Galleron N."/>
            <person name="Ghim S.-Y."/>
            <person name="Glaser P."/>
            <person name="Goffeau A."/>
            <person name="Golightly E.J."/>
            <person name="Grandi G."/>
            <person name="Guiseppi G."/>
            <person name="Guy B.J."/>
            <person name="Haga K."/>
            <person name="Haiech J."/>
            <person name="Harwood C.R."/>
            <person name="Henaut A."/>
            <person name="Hilbert H."/>
            <person name="Holsappel S."/>
            <person name="Hosono S."/>
            <person name="Hullo M.-F."/>
            <person name="Itaya M."/>
            <person name="Jones L.-M."/>
            <person name="Joris B."/>
            <person name="Karamata D."/>
            <person name="Kasahara Y."/>
            <person name="Klaerr-Blanchard M."/>
            <person name="Klein C."/>
            <person name="Kobayashi Y."/>
            <person name="Koetter P."/>
            <person name="Koningstein G."/>
            <person name="Krogh S."/>
            <person name="Kumano M."/>
            <person name="Kurita K."/>
            <person name="Lapidus A."/>
            <person name="Lardinois S."/>
            <person name="Lauber J."/>
            <person name="Lazarevic V."/>
            <person name="Lee S.-M."/>
            <person name="Levine A."/>
            <person name="Liu H."/>
            <person name="Masuda S."/>
            <person name="Mauel C."/>
            <person name="Medigue C."/>
            <person name="Medina N."/>
            <person name="Mellado R.P."/>
            <person name="Mizuno M."/>
            <person name="Moestl D."/>
            <person name="Nakai S."/>
            <person name="Noback M."/>
            <person name="Noone D."/>
            <person name="O'Reilly M."/>
            <person name="Ogawa K."/>
            <person name="Ogiwara A."/>
            <person name="Oudega B."/>
            <person name="Park S.-H."/>
            <person name="Parro V."/>
            <person name="Pohl T.M."/>
            <person name="Portetelle D."/>
            <person name="Porwollik S."/>
            <person name="Prescott A.M."/>
            <person name="Presecan E."/>
            <person name="Pujic P."/>
            <person name="Purnelle B."/>
            <person name="Rapoport G."/>
            <person name="Rey M."/>
            <person name="Reynolds S."/>
            <person name="Rieger M."/>
            <person name="Rivolta C."/>
            <person name="Rocha E."/>
            <person name="Roche B."/>
            <person name="Rose M."/>
            <person name="Sadaie Y."/>
            <person name="Sato T."/>
            <person name="Scanlan E."/>
            <person name="Schleich S."/>
            <person name="Schroeter R."/>
            <person name="Scoffone F."/>
            <person name="Sekiguchi J."/>
            <person name="Sekowska A."/>
            <person name="Seror S.J."/>
            <person name="Serror P."/>
            <person name="Shin B.-S."/>
            <person name="Soldo B."/>
            <person name="Sorokin A."/>
            <person name="Tacconi E."/>
            <person name="Takagi T."/>
            <person name="Takahashi H."/>
            <person name="Takemaru K."/>
            <person name="Takeuchi M."/>
            <person name="Tamakoshi A."/>
            <person name="Tanaka T."/>
            <person name="Terpstra P."/>
            <person name="Tognoni A."/>
            <person name="Tosato V."/>
            <person name="Uchiyama S."/>
            <person name="Vandenbol M."/>
            <person name="Vannier F."/>
            <person name="Vassarotti A."/>
            <person name="Viari A."/>
            <person name="Wambutt R."/>
            <person name="Wedler E."/>
            <person name="Wedler H."/>
            <person name="Weitzenegger T."/>
            <person name="Winters P."/>
            <person name="Wipat A."/>
            <person name="Yamamoto H."/>
            <person name="Yamane K."/>
            <person name="Yasumoto K."/>
            <person name="Yata K."/>
            <person name="Yoshida K."/>
            <person name="Yoshikawa H.-F."/>
            <person name="Zumstein E."/>
            <person name="Yoshikawa H."/>
            <person name="Danchin A."/>
        </authorList>
    </citation>
    <scope>NUCLEOTIDE SEQUENCE [LARGE SCALE GENOMIC DNA]</scope>
    <source>
        <strain>168</strain>
    </source>
</reference>
<reference key="3">
    <citation type="journal article" date="2009" name="Microbiology">
        <title>From a consortium sequence to a unified sequence: the Bacillus subtilis 168 reference genome a decade later.</title>
        <authorList>
            <person name="Barbe V."/>
            <person name="Cruveiller S."/>
            <person name="Kunst F."/>
            <person name="Lenoble P."/>
            <person name="Meurice G."/>
            <person name="Sekowska A."/>
            <person name="Vallenet D."/>
            <person name="Wang T."/>
            <person name="Moszer I."/>
            <person name="Medigue C."/>
            <person name="Danchin A."/>
        </authorList>
    </citation>
    <scope>SEQUENCE REVISION TO 276</scope>
</reference>
<reference key="4">
    <citation type="journal article" date="1997" name="Microbiology">
        <title>The Bacillus subtilis genome from gerBC (311 degrees) to licR (334 degrees).</title>
        <authorList>
            <person name="Presecan E."/>
            <person name="Moszer I."/>
            <person name="Boursier L."/>
            <person name="Cruz Ramos H."/>
            <person name="De La Fuente V."/>
            <person name="Hullo M.-F."/>
            <person name="Lelong C."/>
            <person name="Schleich S."/>
            <person name="Sekowska A."/>
            <person name="Song B.H."/>
            <person name="Villani G."/>
            <person name="Kunst F."/>
            <person name="Danchin A."/>
            <person name="Glaser P."/>
        </authorList>
    </citation>
    <scope>NUCLEOTIDE SEQUENCE [GENOMIC DNA] OF 1-171</scope>
    <source>
        <strain>168</strain>
    </source>
</reference>
<gene>
    <name type="primary">narK</name>
    <name type="ordered locus">BSU37320</name>
</gene>
<comment type="function">
    <text>Involved in excretion of nitrite produced by the dissimilatory reduction of nitrate.</text>
</comment>
<comment type="subcellular location">
    <subcellularLocation>
        <location>Cell membrane</location>
        <topology>Multi-pass membrane protein</topology>
    </subcellularLocation>
</comment>
<comment type="similarity">
    <text evidence="2">Belongs to the major facilitator superfamily. Nitrate/nitrite porter (TC 2.A.1.8) family.</text>
</comment>
<accession>P46907</accession>
<organism>
    <name type="scientific">Bacillus subtilis (strain 168)</name>
    <dbReference type="NCBI Taxonomy" id="224308"/>
    <lineage>
        <taxon>Bacteria</taxon>
        <taxon>Bacillati</taxon>
        <taxon>Bacillota</taxon>
        <taxon>Bacilli</taxon>
        <taxon>Bacillales</taxon>
        <taxon>Bacillaceae</taxon>
        <taxon>Bacillus</taxon>
    </lineage>
</organism>